<reference key="1">
    <citation type="journal article" date="2002" name="Nature">
        <title>The genome sequence of Schizosaccharomyces pombe.</title>
        <authorList>
            <person name="Wood V."/>
            <person name="Gwilliam R."/>
            <person name="Rajandream M.A."/>
            <person name="Lyne M.H."/>
            <person name="Lyne R."/>
            <person name="Stewart A."/>
            <person name="Sgouros J.G."/>
            <person name="Peat N."/>
            <person name="Hayles J."/>
            <person name="Baker S.G."/>
            <person name="Basham D."/>
            <person name="Bowman S."/>
            <person name="Brooks K."/>
            <person name="Brown D."/>
            <person name="Brown S."/>
            <person name="Chillingworth T."/>
            <person name="Churcher C.M."/>
            <person name="Collins M."/>
            <person name="Connor R."/>
            <person name="Cronin A."/>
            <person name="Davis P."/>
            <person name="Feltwell T."/>
            <person name="Fraser A."/>
            <person name="Gentles S."/>
            <person name="Goble A."/>
            <person name="Hamlin N."/>
            <person name="Harris D.E."/>
            <person name="Hidalgo J."/>
            <person name="Hodgson G."/>
            <person name="Holroyd S."/>
            <person name="Hornsby T."/>
            <person name="Howarth S."/>
            <person name="Huckle E.J."/>
            <person name="Hunt S."/>
            <person name="Jagels K."/>
            <person name="James K.D."/>
            <person name="Jones L."/>
            <person name="Jones M."/>
            <person name="Leather S."/>
            <person name="McDonald S."/>
            <person name="McLean J."/>
            <person name="Mooney P."/>
            <person name="Moule S."/>
            <person name="Mungall K.L."/>
            <person name="Murphy L.D."/>
            <person name="Niblett D."/>
            <person name="Odell C."/>
            <person name="Oliver K."/>
            <person name="O'Neil S."/>
            <person name="Pearson D."/>
            <person name="Quail M.A."/>
            <person name="Rabbinowitsch E."/>
            <person name="Rutherford K.M."/>
            <person name="Rutter S."/>
            <person name="Saunders D."/>
            <person name="Seeger K."/>
            <person name="Sharp S."/>
            <person name="Skelton J."/>
            <person name="Simmonds M.N."/>
            <person name="Squares R."/>
            <person name="Squares S."/>
            <person name="Stevens K."/>
            <person name="Taylor K."/>
            <person name="Taylor R.G."/>
            <person name="Tivey A."/>
            <person name="Walsh S.V."/>
            <person name="Warren T."/>
            <person name="Whitehead S."/>
            <person name="Woodward J.R."/>
            <person name="Volckaert G."/>
            <person name="Aert R."/>
            <person name="Robben J."/>
            <person name="Grymonprez B."/>
            <person name="Weltjens I."/>
            <person name="Vanstreels E."/>
            <person name="Rieger M."/>
            <person name="Schaefer M."/>
            <person name="Mueller-Auer S."/>
            <person name="Gabel C."/>
            <person name="Fuchs M."/>
            <person name="Duesterhoeft A."/>
            <person name="Fritzc C."/>
            <person name="Holzer E."/>
            <person name="Moestl D."/>
            <person name="Hilbert H."/>
            <person name="Borzym K."/>
            <person name="Langer I."/>
            <person name="Beck A."/>
            <person name="Lehrach H."/>
            <person name="Reinhardt R."/>
            <person name="Pohl T.M."/>
            <person name="Eger P."/>
            <person name="Zimmermann W."/>
            <person name="Wedler H."/>
            <person name="Wambutt R."/>
            <person name="Purnelle B."/>
            <person name="Goffeau A."/>
            <person name="Cadieu E."/>
            <person name="Dreano S."/>
            <person name="Gloux S."/>
            <person name="Lelaure V."/>
            <person name="Mottier S."/>
            <person name="Galibert F."/>
            <person name="Aves S.J."/>
            <person name="Xiang Z."/>
            <person name="Hunt C."/>
            <person name="Moore K."/>
            <person name="Hurst S.M."/>
            <person name="Lucas M."/>
            <person name="Rochet M."/>
            <person name="Gaillardin C."/>
            <person name="Tallada V.A."/>
            <person name="Garzon A."/>
            <person name="Thode G."/>
            <person name="Daga R.R."/>
            <person name="Cruzado L."/>
            <person name="Jimenez J."/>
            <person name="Sanchez M."/>
            <person name="del Rey F."/>
            <person name="Benito J."/>
            <person name="Dominguez A."/>
            <person name="Revuelta J.L."/>
            <person name="Moreno S."/>
            <person name="Armstrong J."/>
            <person name="Forsburg S.L."/>
            <person name="Cerutti L."/>
            <person name="Lowe T."/>
            <person name="McCombie W.R."/>
            <person name="Paulsen I."/>
            <person name="Potashkin J."/>
            <person name="Shpakovski G.V."/>
            <person name="Ussery D."/>
            <person name="Barrell B.G."/>
            <person name="Nurse P."/>
        </authorList>
    </citation>
    <scope>NUCLEOTIDE SEQUENCE [LARGE SCALE GENOMIC DNA]</scope>
    <source>
        <strain>972 / ATCC 24843</strain>
    </source>
</reference>
<reference key="2">
    <citation type="journal article" date="2002" name="Mol. Cell. Biol.">
        <title>Proteomics analysis reveals stable multiprotein complexes in both fission and budding yeasts containing Myb-related Cdc5p/Cef1p, novel pre-mRNA splicing factors, and snRNAs.</title>
        <authorList>
            <person name="Ohi M.D."/>
            <person name="Link A.J."/>
            <person name="Ren L."/>
            <person name="Jennings J.L."/>
            <person name="McDonald W.H."/>
            <person name="Gould K.L."/>
        </authorList>
    </citation>
    <scope>IDENTIFICATION IN THE CWF COMPLEX</scope>
    <scope>IDENTIFICATION BY MASS SPECTROMETRY</scope>
</reference>
<reference key="3">
    <citation type="journal article" date="2006" name="Nat. Biotechnol.">
        <title>ORFeome cloning and global analysis of protein localization in the fission yeast Schizosaccharomyces pombe.</title>
        <authorList>
            <person name="Matsuyama A."/>
            <person name="Arai R."/>
            <person name="Yashiroda Y."/>
            <person name="Shirai A."/>
            <person name="Kamata A."/>
            <person name="Sekido S."/>
            <person name="Kobayashi Y."/>
            <person name="Hashimoto A."/>
            <person name="Hamamoto M."/>
            <person name="Hiraoka Y."/>
            <person name="Horinouchi S."/>
            <person name="Yoshida M."/>
        </authorList>
    </citation>
    <scope>SUBCELLULAR LOCATION [LARGE SCALE ANALYSIS]</scope>
</reference>
<reference key="4">
    <citation type="journal article" date="2008" name="J. Proteome Res.">
        <title>Phosphoproteome analysis of fission yeast.</title>
        <authorList>
            <person name="Wilson-Grady J.T."/>
            <person name="Villen J."/>
            <person name="Gygi S.P."/>
        </authorList>
    </citation>
    <scope>PHOSPHORYLATION [LARGE SCALE ANALYSIS] AT SER-360</scope>
    <scope>IDENTIFICATION BY MASS SPECTROMETRY</scope>
</reference>
<evidence type="ECO:0000255" key="1">
    <source>
        <dbReference type="PROSITE-ProRule" id="PRU00042"/>
    </source>
</evidence>
<evidence type="ECO:0000255" key="2">
    <source>
        <dbReference type="PROSITE-ProRule" id="PRU00130"/>
    </source>
</evidence>
<evidence type="ECO:0000256" key="3">
    <source>
        <dbReference type="SAM" id="MobiDB-lite"/>
    </source>
</evidence>
<evidence type="ECO:0000269" key="4">
    <source>
    </source>
</evidence>
<evidence type="ECO:0000269" key="5">
    <source>
    </source>
</evidence>
<evidence type="ECO:0000269" key="6">
    <source>
    </source>
</evidence>
<evidence type="ECO:0000305" key="7"/>
<evidence type="ECO:0000305" key="8">
    <source>
    </source>
</evidence>
<dbReference type="EMBL" id="CU329671">
    <property type="protein sequence ID" value="CAA19057.1"/>
    <property type="molecule type" value="Genomic_DNA"/>
</dbReference>
<dbReference type="PIR" id="T40304">
    <property type="entry name" value="T40304"/>
</dbReference>
<dbReference type="RefSeq" id="NP_595337.1">
    <property type="nucleotide sequence ID" value="NM_001021245.2"/>
</dbReference>
<dbReference type="SMR" id="O59706"/>
<dbReference type="BioGRID" id="277448">
    <property type="interactions" value="17"/>
</dbReference>
<dbReference type="FunCoup" id="O59706">
    <property type="interactions" value="1288"/>
</dbReference>
<dbReference type="IntAct" id="O59706">
    <property type="interactions" value="6"/>
</dbReference>
<dbReference type="STRING" id="284812.O59706"/>
<dbReference type="iPTMnet" id="O59706"/>
<dbReference type="PaxDb" id="4896-SPBC36.09.1"/>
<dbReference type="EnsemblFungi" id="SPBC36.09.1">
    <property type="protein sequence ID" value="SPBC36.09.1:pep"/>
    <property type="gene ID" value="SPBC36.09"/>
</dbReference>
<dbReference type="GeneID" id="2540932"/>
<dbReference type="KEGG" id="spo:2540932"/>
<dbReference type="PomBase" id="SPBC36.09">
    <property type="gene designation" value="sap61"/>
</dbReference>
<dbReference type="VEuPathDB" id="FungiDB:SPBC36.09"/>
<dbReference type="eggNOG" id="KOG2636">
    <property type="taxonomic scope" value="Eukaryota"/>
</dbReference>
<dbReference type="HOGENOM" id="CLU_027160_1_0_1"/>
<dbReference type="InParanoid" id="O59706"/>
<dbReference type="OMA" id="GPKAFQK"/>
<dbReference type="PhylomeDB" id="O59706"/>
<dbReference type="PRO" id="PR:O59706"/>
<dbReference type="Proteomes" id="UP000002485">
    <property type="component" value="Chromosome II"/>
</dbReference>
<dbReference type="GO" id="GO:0005829">
    <property type="term" value="C:cytosol"/>
    <property type="evidence" value="ECO:0007005"/>
    <property type="project" value="PomBase"/>
</dbReference>
<dbReference type="GO" id="GO:0005634">
    <property type="term" value="C:nucleus"/>
    <property type="evidence" value="ECO:0007005"/>
    <property type="project" value="PomBase"/>
</dbReference>
<dbReference type="GO" id="GO:0005681">
    <property type="term" value="C:spliceosomal complex"/>
    <property type="evidence" value="ECO:0000318"/>
    <property type="project" value="GO_Central"/>
</dbReference>
<dbReference type="GO" id="GO:0005686">
    <property type="term" value="C:U2 snRNP"/>
    <property type="evidence" value="ECO:0000314"/>
    <property type="project" value="PomBase"/>
</dbReference>
<dbReference type="GO" id="GO:0071004">
    <property type="term" value="C:U2-type prespliceosome"/>
    <property type="evidence" value="ECO:0000266"/>
    <property type="project" value="PomBase"/>
</dbReference>
<dbReference type="GO" id="GO:0003723">
    <property type="term" value="F:RNA binding"/>
    <property type="evidence" value="ECO:0000318"/>
    <property type="project" value="GO_Central"/>
</dbReference>
<dbReference type="GO" id="GO:0008270">
    <property type="term" value="F:zinc ion binding"/>
    <property type="evidence" value="ECO:0007669"/>
    <property type="project" value="UniProtKB-KW"/>
</dbReference>
<dbReference type="GO" id="GO:0045292">
    <property type="term" value="P:mRNA cis splicing, via spliceosome"/>
    <property type="evidence" value="ECO:0000269"/>
    <property type="project" value="PomBase"/>
</dbReference>
<dbReference type="GO" id="GO:0000398">
    <property type="term" value="P:mRNA splicing, via spliceosome"/>
    <property type="evidence" value="ECO:0000318"/>
    <property type="project" value="GO_Central"/>
</dbReference>
<dbReference type="Gene3D" id="3.30.160.60">
    <property type="entry name" value="Classic Zinc Finger"/>
    <property type="match status" value="1"/>
</dbReference>
<dbReference type="InterPro" id="IPR000690">
    <property type="entry name" value="Matrin/U1-C_Znf_C2H2"/>
</dbReference>
<dbReference type="InterPro" id="IPR003604">
    <property type="entry name" value="Matrin/U1-like-C_Znf_C2H2"/>
</dbReference>
<dbReference type="InterPro" id="IPR051421">
    <property type="entry name" value="RNA_Proc_DNA_Dmg_Regulator"/>
</dbReference>
<dbReference type="InterPro" id="IPR031774">
    <property type="entry name" value="SF3A3_dom"/>
</dbReference>
<dbReference type="InterPro" id="IPR024598">
    <property type="entry name" value="SF3a60/Prp9_C"/>
</dbReference>
<dbReference type="InterPro" id="IPR021966">
    <property type="entry name" value="SF3a60_bindingd"/>
</dbReference>
<dbReference type="InterPro" id="IPR022755">
    <property type="entry name" value="Znf_C2H2_jaz"/>
</dbReference>
<dbReference type="InterPro" id="IPR036236">
    <property type="entry name" value="Znf_C2H2_sf"/>
</dbReference>
<dbReference type="InterPro" id="IPR013087">
    <property type="entry name" value="Znf_C2H2_type"/>
</dbReference>
<dbReference type="PANTHER" id="PTHR12786:SF2">
    <property type="entry name" value="SPLICING FACTOR 3A SUBUNIT 3"/>
    <property type="match status" value="1"/>
</dbReference>
<dbReference type="PANTHER" id="PTHR12786">
    <property type="entry name" value="SPLICING FACTOR SF3A-RELATED"/>
    <property type="match status" value="1"/>
</dbReference>
<dbReference type="Pfam" id="PF16837">
    <property type="entry name" value="SF3A3"/>
    <property type="match status" value="1"/>
</dbReference>
<dbReference type="Pfam" id="PF12108">
    <property type="entry name" value="SF3a60_bindingd"/>
    <property type="match status" value="1"/>
</dbReference>
<dbReference type="Pfam" id="PF11931">
    <property type="entry name" value="SF3a60_Prp9_C"/>
    <property type="match status" value="1"/>
</dbReference>
<dbReference type="Pfam" id="PF12171">
    <property type="entry name" value="zf-C2H2_jaz"/>
    <property type="match status" value="1"/>
</dbReference>
<dbReference type="SMART" id="SM00355">
    <property type="entry name" value="ZnF_C2H2"/>
    <property type="match status" value="2"/>
</dbReference>
<dbReference type="SMART" id="SM00451">
    <property type="entry name" value="ZnF_U1"/>
    <property type="match status" value="1"/>
</dbReference>
<dbReference type="SUPFAM" id="SSF57667">
    <property type="entry name" value="beta-beta-alpha zinc fingers"/>
    <property type="match status" value="1"/>
</dbReference>
<dbReference type="PROSITE" id="PS50171">
    <property type="entry name" value="ZF_MATRIN"/>
    <property type="match status" value="1"/>
</dbReference>
<dbReference type="PROSITE" id="PS00028">
    <property type="entry name" value="ZINC_FINGER_C2H2_1"/>
    <property type="match status" value="1"/>
</dbReference>
<dbReference type="PROSITE" id="PS50157">
    <property type="entry name" value="ZINC_FINGER_C2H2_2"/>
    <property type="match status" value="1"/>
</dbReference>
<keyword id="KW-0963">Cytoplasm</keyword>
<keyword id="KW-0479">Metal-binding</keyword>
<keyword id="KW-0539">Nucleus</keyword>
<keyword id="KW-0597">Phosphoprotein</keyword>
<keyword id="KW-1185">Reference proteome</keyword>
<keyword id="KW-0862">Zinc</keyword>
<keyword id="KW-0863">Zinc-finger</keyword>
<organism>
    <name type="scientific">Schizosaccharomyces pombe (strain 972 / ATCC 24843)</name>
    <name type="common">Fission yeast</name>
    <dbReference type="NCBI Taxonomy" id="284812"/>
    <lineage>
        <taxon>Eukaryota</taxon>
        <taxon>Fungi</taxon>
        <taxon>Dikarya</taxon>
        <taxon>Ascomycota</taxon>
        <taxon>Taphrinomycotina</taxon>
        <taxon>Schizosaccharomycetes</taxon>
        <taxon>Schizosaccharomycetales</taxon>
        <taxon>Schizosaccharomycetaceae</taxon>
        <taxon>Schizosaccharomyces</taxon>
    </lineage>
</organism>
<comment type="function">
    <text>Involved in mRNA splicing where it associates with cdc5 and the other cwf proteins as part of the spliceosome.</text>
</comment>
<comment type="subunit">
    <text evidence="4">Belongs to the 40S cdc5-associated complex (or cwf complex), a spliceosome sub-complex reminiscent of a late-stage spliceosome composed of the U2, U5 and U6 snRNAs and at least brr2, cdc5, cwf2/prp3, cwf3/syf1, cwf4/syf3, cwf5/ecm2, spp42/cwf6, cwf7/spf27, cwf8, cwf9, cwf10, cwf11, cwf12, prp45/cwf13, cwf14, cwf15, cwf16, cwf17, cwf18, cwf19, cwf20, cwf21, cwf22, cwf23, cwf24, cwf25, cwf26, cyp7/cwf27, cwf28, cwf29/ist3, lea1, msl1, prp5/cwf1, prp10, prp12/sap130, prp17, prp22, sap61, sap62, sap114, sap145, slu7, smb1, smd1, smd3, smf1, smg1 and syf2.</text>
</comment>
<comment type="subcellular location">
    <subcellularLocation>
        <location evidence="8">Nucleus</location>
    </subcellularLocation>
    <subcellularLocation>
        <location evidence="5">Cytoplasm</location>
    </subcellularLocation>
</comment>
<comment type="similarity">
    <text evidence="7">Belongs to the SF3A3 family.</text>
</comment>
<accession>O59706</accession>
<proteinExistence type="evidence at protein level"/>
<protein>
    <recommendedName>
        <fullName>Pre-mRNA-splicing factor sap61</fullName>
    </recommendedName>
    <alternativeName>
        <fullName>Spliceosome-associated protein 61</fullName>
    </alternativeName>
</protein>
<sequence length="492" mass="57255">MSESVLETERYAHEELERLQQAIVDRQVANPKAPRERLRLEHQSAQFLNQFRETSKKLLVSHESSDRLKDQEVARINADDDLTEFYKSLGEIQEFHKKYPDHKVEDLSQLYSIKPSQPGIDEIDTLFRGEEMYGRFMDLNECYEEYINLSNVQHISYLEYLKNLEDFDQIPKPEKNQTYINYITHLYEYLVSFYRRTHPLSNLDKIIAVFDTEFDAAWEAGLPGWYSHNAEAEKDGKDSTEAFYCEVCQKFFGKITVFEAHKKSKAHNKAVKRMQSSSPSTTSNTNEKQKGPKAIARIEFLIKKLTSLLDDVRKDTRENVVRRQTLTAAERLAEVEAAEREAFEQSTPSVSVEGNQDEESDQDDEEKIYNPLKLPLGWDGKPIPFWLWKLHGLGKEFPCEICGNYVYMGRKAFDKHFTEQRHIYGLKCLGISPSPLFNQITSIDEALQLWQKYKVDSKKRETTMASLNEMEDDEGNVMSEKVYNDLKAQGLL</sequence>
<feature type="chain" id="PRO_0000352806" description="Pre-mRNA-splicing factor sap61">
    <location>
        <begin position="1"/>
        <end position="492"/>
    </location>
</feature>
<feature type="zinc finger region" description="C2H2-type" evidence="1">
    <location>
        <begin position="243"/>
        <end position="267"/>
    </location>
</feature>
<feature type="zinc finger region" description="Matrin-type" evidence="2">
    <location>
        <begin position="397"/>
        <end position="428"/>
    </location>
</feature>
<feature type="region of interest" description="Disordered" evidence="3">
    <location>
        <begin position="268"/>
        <end position="291"/>
    </location>
</feature>
<feature type="region of interest" description="Disordered" evidence="3">
    <location>
        <begin position="337"/>
        <end position="365"/>
    </location>
</feature>
<feature type="compositionally biased region" description="Low complexity" evidence="3">
    <location>
        <begin position="276"/>
        <end position="286"/>
    </location>
</feature>
<feature type="compositionally biased region" description="Polar residues" evidence="3">
    <location>
        <begin position="345"/>
        <end position="354"/>
    </location>
</feature>
<feature type="compositionally biased region" description="Acidic residues" evidence="3">
    <location>
        <begin position="355"/>
        <end position="365"/>
    </location>
</feature>
<feature type="modified residue" description="Phosphoserine" evidence="6">
    <location>
        <position position="360"/>
    </location>
</feature>
<gene>
    <name type="primary">sap61</name>
    <name type="ORF">SPBC36.09</name>
</gene>
<name>SAP61_SCHPO</name>